<keyword id="KW-0120">Carbon dioxide fixation</keyword>
<keyword id="KW-0456">Lyase</keyword>
<keyword id="KW-0460">Magnesium</keyword>
<organism>
    <name type="scientific">Aeromonas salmonicida (strain A449)</name>
    <dbReference type="NCBI Taxonomy" id="382245"/>
    <lineage>
        <taxon>Bacteria</taxon>
        <taxon>Pseudomonadati</taxon>
        <taxon>Pseudomonadota</taxon>
        <taxon>Gammaproteobacteria</taxon>
        <taxon>Aeromonadales</taxon>
        <taxon>Aeromonadaceae</taxon>
        <taxon>Aeromonas</taxon>
    </lineage>
</organism>
<dbReference type="EC" id="4.1.1.31" evidence="1"/>
<dbReference type="EMBL" id="CP000644">
    <property type="protein sequence ID" value="ABO88742.1"/>
    <property type="molecule type" value="Genomic_DNA"/>
</dbReference>
<dbReference type="RefSeq" id="WP_005313775.1">
    <property type="nucleotide sequence ID" value="NC_009348.1"/>
</dbReference>
<dbReference type="SMR" id="A4SIM0"/>
<dbReference type="STRING" id="29491.GCA_000820065_01923"/>
<dbReference type="KEGG" id="asa:ASA_0576"/>
<dbReference type="eggNOG" id="COG2352">
    <property type="taxonomic scope" value="Bacteria"/>
</dbReference>
<dbReference type="HOGENOM" id="CLU_006557_2_0_6"/>
<dbReference type="Proteomes" id="UP000000225">
    <property type="component" value="Chromosome"/>
</dbReference>
<dbReference type="GO" id="GO:0005829">
    <property type="term" value="C:cytosol"/>
    <property type="evidence" value="ECO:0007669"/>
    <property type="project" value="TreeGrafter"/>
</dbReference>
<dbReference type="GO" id="GO:0000287">
    <property type="term" value="F:magnesium ion binding"/>
    <property type="evidence" value="ECO:0007669"/>
    <property type="project" value="UniProtKB-UniRule"/>
</dbReference>
<dbReference type="GO" id="GO:0008964">
    <property type="term" value="F:phosphoenolpyruvate carboxylase activity"/>
    <property type="evidence" value="ECO:0007669"/>
    <property type="project" value="UniProtKB-UniRule"/>
</dbReference>
<dbReference type="GO" id="GO:0015977">
    <property type="term" value="P:carbon fixation"/>
    <property type="evidence" value="ECO:0007669"/>
    <property type="project" value="UniProtKB-UniRule"/>
</dbReference>
<dbReference type="GO" id="GO:0006107">
    <property type="term" value="P:oxaloacetate metabolic process"/>
    <property type="evidence" value="ECO:0007669"/>
    <property type="project" value="UniProtKB-UniRule"/>
</dbReference>
<dbReference type="GO" id="GO:0006099">
    <property type="term" value="P:tricarboxylic acid cycle"/>
    <property type="evidence" value="ECO:0007669"/>
    <property type="project" value="InterPro"/>
</dbReference>
<dbReference type="Gene3D" id="1.20.1440.90">
    <property type="entry name" value="Phosphoenolpyruvate/pyruvate domain"/>
    <property type="match status" value="1"/>
</dbReference>
<dbReference type="HAMAP" id="MF_00595">
    <property type="entry name" value="PEPcase_type1"/>
    <property type="match status" value="1"/>
</dbReference>
<dbReference type="InterPro" id="IPR021135">
    <property type="entry name" value="PEP_COase"/>
</dbReference>
<dbReference type="InterPro" id="IPR022805">
    <property type="entry name" value="PEP_COase_bac/pln-type"/>
</dbReference>
<dbReference type="InterPro" id="IPR018129">
    <property type="entry name" value="PEP_COase_Lys_AS"/>
</dbReference>
<dbReference type="InterPro" id="IPR033129">
    <property type="entry name" value="PEPCASE_His_AS"/>
</dbReference>
<dbReference type="InterPro" id="IPR015813">
    <property type="entry name" value="Pyrv/PenolPyrv_kinase-like_dom"/>
</dbReference>
<dbReference type="NCBIfam" id="NF000584">
    <property type="entry name" value="PRK00009.1"/>
    <property type="match status" value="1"/>
</dbReference>
<dbReference type="PANTHER" id="PTHR30523">
    <property type="entry name" value="PHOSPHOENOLPYRUVATE CARBOXYLASE"/>
    <property type="match status" value="1"/>
</dbReference>
<dbReference type="PANTHER" id="PTHR30523:SF6">
    <property type="entry name" value="PHOSPHOENOLPYRUVATE CARBOXYLASE"/>
    <property type="match status" value="1"/>
</dbReference>
<dbReference type="Pfam" id="PF00311">
    <property type="entry name" value="PEPcase"/>
    <property type="match status" value="1"/>
</dbReference>
<dbReference type="PRINTS" id="PR00150">
    <property type="entry name" value="PEPCARBXLASE"/>
</dbReference>
<dbReference type="SUPFAM" id="SSF51621">
    <property type="entry name" value="Phosphoenolpyruvate/pyruvate domain"/>
    <property type="match status" value="1"/>
</dbReference>
<dbReference type="PROSITE" id="PS00781">
    <property type="entry name" value="PEPCASE_1"/>
    <property type="match status" value="1"/>
</dbReference>
<dbReference type="PROSITE" id="PS00393">
    <property type="entry name" value="PEPCASE_2"/>
    <property type="match status" value="1"/>
</dbReference>
<reference key="1">
    <citation type="journal article" date="2008" name="BMC Genomics">
        <title>The genome of Aeromonas salmonicida subsp. salmonicida A449: insights into the evolution of a fish pathogen.</title>
        <authorList>
            <person name="Reith M.E."/>
            <person name="Singh R.K."/>
            <person name="Curtis B."/>
            <person name="Boyd J.M."/>
            <person name="Bouevitch A."/>
            <person name="Kimball J."/>
            <person name="Munholland J."/>
            <person name="Murphy C."/>
            <person name="Sarty D."/>
            <person name="Williams J."/>
            <person name="Nash J.H."/>
            <person name="Johnson S.C."/>
            <person name="Brown L.L."/>
        </authorList>
    </citation>
    <scope>NUCLEOTIDE SEQUENCE [LARGE SCALE GENOMIC DNA]</scope>
    <source>
        <strain>A449</strain>
    </source>
</reference>
<sequence length="877" mass="99049">MNEKYAALRANVGMLGQLLGKSIKDHQGQAFLDKIETIRQLAKSSRKGNEADRERLLETLRTLSDDELLPVARAFSQFLNLANVAEQFHTISRRCEEQVCTPDPLEQMFAKLKASNLSQEAIIQAVRELDIDLVLTAHPTEVTRRTLIHKHVQLNDCLEALELSDLLPRERDKILNRIEQLVNQAWHTNEIREQRPTPVDEAKWGFAVVENSLWPAIPEFMRNLDERLQQHLGVRLPLDAAPVKFTSWMGGDRDGNPFVTAKVTAEVLELGRWMAVSLFYKDIKELTSELSMSDCTDAVRERVGDHPEPYRALVRELREALRETQEYLTAKVQGQVSESRDLITTTAQLREPLELCYHSMHACGMGNIADGMLLDVLRKLACFGIHLVKLDIRQDGERHGQVFSELTRYLGMGDYAEWSEDDKQAFLLNELNSRRPLIPTDWEPSDETRETIDTCRVIAQHDPDAFGIYIISMAGAPSDVLAVQLLLKEAGCKFRMPVAPLFETQEDLMAGTAVMERLLSVDWYRGYIQGRQYVMIGYSDSAKDAGMMAAGWAQYAAMESLVALAEASNLRLTLFHGRGGTVGRGGAPAHQAILSQPPGSLRGGLRVTEQGEMIRFKFGLPKVAIHSLNLYTSAVLEGNLLPPPKPKESWRAVMEQLATVSCDHYRSIVRGHPDFVPYFRAATPEMELGKLPLGSRPAKRKPNGGVESLRAIPWIFAWTQNRLMLPAWLGAHKGLEHAITDGQKSVLEEMSRQWPFFRTRLEMLEMVFLKADLWLAEYYDTRLVPQELWNLGKQLRQELADAIQIVLQLRPQGDLLDDQPWIKESINLRNPYTDPLNVLQVELLGRSRSHTETLHPELDQALMVTIAGIAAGMRNTG</sequence>
<evidence type="ECO:0000255" key="1">
    <source>
        <dbReference type="HAMAP-Rule" id="MF_00595"/>
    </source>
</evidence>
<protein>
    <recommendedName>
        <fullName evidence="1">Phosphoenolpyruvate carboxylase</fullName>
        <shortName evidence="1">PEPC</shortName>
        <shortName evidence="1">PEPCase</shortName>
        <ecNumber evidence="1">4.1.1.31</ecNumber>
    </recommendedName>
</protein>
<comment type="function">
    <text evidence="1">Forms oxaloacetate, a four-carbon dicarboxylic acid source for the tricarboxylic acid cycle.</text>
</comment>
<comment type="catalytic activity">
    <reaction evidence="1">
        <text>oxaloacetate + phosphate = phosphoenolpyruvate + hydrogencarbonate</text>
        <dbReference type="Rhea" id="RHEA:28370"/>
        <dbReference type="ChEBI" id="CHEBI:16452"/>
        <dbReference type="ChEBI" id="CHEBI:17544"/>
        <dbReference type="ChEBI" id="CHEBI:43474"/>
        <dbReference type="ChEBI" id="CHEBI:58702"/>
        <dbReference type="EC" id="4.1.1.31"/>
    </reaction>
</comment>
<comment type="cofactor">
    <cofactor evidence="1">
        <name>Mg(2+)</name>
        <dbReference type="ChEBI" id="CHEBI:18420"/>
    </cofactor>
</comment>
<comment type="similarity">
    <text evidence="1">Belongs to the PEPCase type 1 family.</text>
</comment>
<name>CAPP_AERS4</name>
<feature type="chain" id="PRO_1000025545" description="Phosphoenolpyruvate carboxylase">
    <location>
        <begin position="1"/>
        <end position="877"/>
    </location>
</feature>
<feature type="active site" evidence="1">
    <location>
        <position position="138"/>
    </location>
</feature>
<feature type="active site" evidence="1">
    <location>
        <position position="543"/>
    </location>
</feature>
<gene>
    <name evidence="1" type="primary">ppc</name>
    <name type="ordered locus">ASA_0576</name>
</gene>
<proteinExistence type="inferred from homology"/>
<accession>A4SIM0</accession>